<accession>Q5XHC5</accession>
<proteinExistence type="evidence at transcript level"/>
<protein>
    <recommendedName>
        <fullName evidence="2">Insulin-like growth factor-binding protein 2</fullName>
        <shortName evidence="2">IGF-binding protein 2</shortName>
        <shortName evidence="2">IGFBP-2</shortName>
    </recommendedName>
</protein>
<feature type="signal peptide" evidence="4">
    <location>
        <begin position="1"/>
        <end position="21"/>
    </location>
</feature>
<feature type="chain" id="PRO_0000381736" description="Insulin-like growth factor-binding protein 2" evidence="4">
    <location>
        <begin position="22"/>
        <end position="281"/>
    </location>
</feature>
<feature type="domain" description="IGFBP N-terminal" evidence="6">
    <location>
        <begin position="23"/>
        <end position="106"/>
    </location>
</feature>
<feature type="domain" description="Thyroglobulin type-1" evidence="5">
    <location>
        <begin position="180"/>
        <end position="262"/>
    </location>
</feature>
<feature type="region of interest" description="Disordered" evidence="7">
    <location>
        <begin position="107"/>
        <end position="127"/>
    </location>
</feature>
<feature type="region of interest" description="Disordered" evidence="7">
    <location>
        <begin position="139"/>
        <end position="180"/>
    </location>
</feature>
<feature type="short sequence motif" description="Cell attachment site" evidence="4">
    <location>
        <begin position="257"/>
        <end position="259"/>
    </location>
</feature>
<feature type="compositionally biased region" description="Basic and acidic residues" evidence="7">
    <location>
        <begin position="156"/>
        <end position="176"/>
    </location>
</feature>
<feature type="disulfide bond" evidence="6">
    <location>
        <begin position="27"/>
        <end position="56"/>
    </location>
</feature>
<feature type="disulfide bond" evidence="6">
    <location>
        <begin position="30"/>
        <end position="58"/>
    </location>
</feature>
<feature type="disulfide bond" evidence="6">
    <location>
        <begin position="38"/>
        <end position="59"/>
    </location>
</feature>
<feature type="disulfide bond" evidence="6">
    <location>
        <begin position="47"/>
        <end position="62"/>
    </location>
</feature>
<feature type="disulfide bond" evidence="6">
    <location>
        <begin position="70"/>
        <end position="83"/>
    </location>
</feature>
<feature type="disulfide bond" evidence="6">
    <location>
        <begin position="77"/>
        <end position="103"/>
    </location>
</feature>
<feature type="disulfide bond" evidence="2 5">
    <location>
        <begin position="183"/>
        <end position="217"/>
    </location>
</feature>
<feature type="disulfide bond" evidence="2 5">
    <location>
        <begin position="228"/>
        <end position="239"/>
    </location>
</feature>
<feature type="disulfide bond" evidence="2 5">
    <location>
        <begin position="241"/>
        <end position="262"/>
    </location>
</feature>
<evidence type="ECO:0000250" key="1"/>
<evidence type="ECO:0000250" key="2">
    <source>
        <dbReference type="UniProtKB" id="P18065"/>
    </source>
</evidence>
<evidence type="ECO:0000250" key="3">
    <source>
        <dbReference type="UniProtKB" id="Q9PTH3"/>
    </source>
</evidence>
<evidence type="ECO:0000255" key="4"/>
<evidence type="ECO:0000255" key="5">
    <source>
        <dbReference type="PROSITE-ProRule" id="PRU00500"/>
    </source>
</evidence>
<evidence type="ECO:0000255" key="6">
    <source>
        <dbReference type="PROSITE-ProRule" id="PRU00653"/>
    </source>
</evidence>
<evidence type="ECO:0000256" key="7">
    <source>
        <dbReference type="SAM" id="MobiDB-lite"/>
    </source>
</evidence>
<evidence type="ECO:0000305" key="8"/>
<evidence type="ECO:0000312" key="9">
    <source>
        <dbReference type="EMBL" id="AAH84133.1"/>
    </source>
</evidence>
<organism>
    <name type="scientific">Xenopus laevis</name>
    <name type="common">African clawed frog</name>
    <dbReference type="NCBI Taxonomy" id="8355"/>
    <lineage>
        <taxon>Eukaryota</taxon>
        <taxon>Metazoa</taxon>
        <taxon>Chordata</taxon>
        <taxon>Craniata</taxon>
        <taxon>Vertebrata</taxon>
        <taxon>Euteleostomi</taxon>
        <taxon>Amphibia</taxon>
        <taxon>Batrachia</taxon>
        <taxon>Anura</taxon>
        <taxon>Pipoidea</taxon>
        <taxon>Pipidae</taxon>
        <taxon>Xenopodinae</taxon>
        <taxon>Xenopus</taxon>
        <taxon>Xenopus</taxon>
    </lineage>
</organism>
<name>IBP2_XENLA</name>
<sequence>MVLSEHLLVLLGAVLCAPALSDVLFRCPPCSPERLAACPGNSPRSPCAELVRAPGCGCCPVCARLEGESCGVYTARCAGGLRCYPHPGSELPLQALVLGLGTCGKRRDAEYGSSQERGTELPEDQSDNMLVDNNLVAGPAVPGDFMPRKSSKAHAVNRERANEQHRSKTNKSEDKKRPARSLCQLQLDQVLERISGMHLPDDRGPLEHLYALPIPNCDKNGFFNLKQCKMSVNGQRGECWCVNPITGKVLPGSPTVRGDPECHLFYTNPEEERRAHTQRAP</sequence>
<reference evidence="9" key="1">
    <citation type="submission" date="2004-10" db="EMBL/GenBank/DDBJ databases">
        <authorList>
            <consortium name="NIH - Xenopus Gene Collection (XGC) project"/>
        </authorList>
    </citation>
    <scope>NUCLEOTIDE SEQUENCE [LARGE SCALE MRNA]</scope>
    <source>
        <tissue evidence="9">Kidney</tissue>
    </source>
</reference>
<dbReference type="EMBL" id="BC084133">
    <property type="protein sequence ID" value="AAH84133.1"/>
    <property type="molecule type" value="mRNA"/>
</dbReference>
<dbReference type="SMR" id="Q5XHC5"/>
<dbReference type="GeneID" id="108701262"/>
<dbReference type="KEGG" id="xla:108701262"/>
<dbReference type="AGR" id="Xenbase:XB-GENE-865692"/>
<dbReference type="Xenbase" id="XB-GENE-865692">
    <property type="gene designation" value="igfbp2.L"/>
</dbReference>
<dbReference type="OrthoDB" id="9984807at2759"/>
<dbReference type="Proteomes" id="UP000186698">
    <property type="component" value="Chromosome 9_10L"/>
</dbReference>
<dbReference type="Bgee" id="108701262">
    <property type="expression patterns" value="Expressed in kidney and 11 other cell types or tissues"/>
</dbReference>
<dbReference type="GO" id="GO:0005576">
    <property type="term" value="C:extracellular region"/>
    <property type="evidence" value="ECO:0000250"/>
    <property type="project" value="UniProtKB"/>
</dbReference>
<dbReference type="GO" id="GO:0005615">
    <property type="term" value="C:extracellular space"/>
    <property type="evidence" value="ECO:0000318"/>
    <property type="project" value="GO_Central"/>
</dbReference>
<dbReference type="GO" id="GO:0031994">
    <property type="term" value="F:insulin-like growth factor I binding"/>
    <property type="evidence" value="ECO:0000250"/>
    <property type="project" value="UniProtKB"/>
</dbReference>
<dbReference type="GO" id="GO:0031995">
    <property type="term" value="F:insulin-like growth factor II binding"/>
    <property type="evidence" value="ECO:0000250"/>
    <property type="project" value="UniProtKB"/>
</dbReference>
<dbReference type="GO" id="GO:0043567">
    <property type="term" value="P:regulation of insulin-like growth factor receptor signaling pathway"/>
    <property type="evidence" value="ECO:0000250"/>
    <property type="project" value="UniProtKB"/>
</dbReference>
<dbReference type="CDD" id="cd00191">
    <property type="entry name" value="TY"/>
    <property type="match status" value="1"/>
</dbReference>
<dbReference type="FunFam" id="4.10.40.20:FF:000012">
    <property type="entry name" value="Insulin like growth factor binding protein 2"/>
    <property type="match status" value="1"/>
</dbReference>
<dbReference type="FunFam" id="4.10.800.10:FF:000002">
    <property type="entry name" value="Insulin-like growth factor-binding protein 2"/>
    <property type="match status" value="1"/>
</dbReference>
<dbReference type="Gene3D" id="4.10.40.20">
    <property type="match status" value="1"/>
</dbReference>
<dbReference type="Gene3D" id="4.10.800.10">
    <property type="entry name" value="Thyroglobulin type-1"/>
    <property type="match status" value="1"/>
</dbReference>
<dbReference type="InterPro" id="IPR009030">
    <property type="entry name" value="Growth_fac_rcpt_cys_sf"/>
</dbReference>
<dbReference type="InterPro" id="IPR012210">
    <property type="entry name" value="IGFBP-2"/>
</dbReference>
<dbReference type="InterPro" id="IPR000867">
    <property type="entry name" value="IGFBP-like"/>
</dbReference>
<dbReference type="InterPro" id="IPR022321">
    <property type="entry name" value="IGFBP_1-6_chordata"/>
</dbReference>
<dbReference type="InterPro" id="IPR017891">
    <property type="entry name" value="Insulin_GF-bd_Cys-rich_CS"/>
</dbReference>
<dbReference type="InterPro" id="IPR000716">
    <property type="entry name" value="Thyroglobulin_1"/>
</dbReference>
<dbReference type="InterPro" id="IPR036857">
    <property type="entry name" value="Thyroglobulin_1_sf"/>
</dbReference>
<dbReference type="PANTHER" id="PTHR11551">
    <property type="entry name" value="INSULIN-LIKE GROWTH FACTOR BINDING PROTEIN"/>
    <property type="match status" value="1"/>
</dbReference>
<dbReference type="PANTHER" id="PTHR11551:SF5">
    <property type="entry name" value="INSULIN-LIKE GROWTH FACTOR-BINDING PROTEIN 2"/>
    <property type="match status" value="1"/>
</dbReference>
<dbReference type="Pfam" id="PF00219">
    <property type="entry name" value="IGFBP"/>
    <property type="match status" value="1"/>
</dbReference>
<dbReference type="Pfam" id="PF00086">
    <property type="entry name" value="Thyroglobulin_1"/>
    <property type="match status" value="1"/>
</dbReference>
<dbReference type="PRINTS" id="PR01976">
    <property type="entry name" value="IGFBPFAMILY"/>
</dbReference>
<dbReference type="PRINTS" id="PR01978">
    <property type="entry name" value="IGFBPFAMILY2"/>
</dbReference>
<dbReference type="SMART" id="SM00121">
    <property type="entry name" value="IB"/>
    <property type="match status" value="1"/>
</dbReference>
<dbReference type="SMART" id="SM00211">
    <property type="entry name" value="TY"/>
    <property type="match status" value="1"/>
</dbReference>
<dbReference type="SUPFAM" id="SSF57184">
    <property type="entry name" value="Growth factor receptor domain"/>
    <property type="match status" value="1"/>
</dbReference>
<dbReference type="SUPFAM" id="SSF57610">
    <property type="entry name" value="Thyroglobulin type-1 domain"/>
    <property type="match status" value="1"/>
</dbReference>
<dbReference type="PROSITE" id="PS00222">
    <property type="entry name" value="IGFBP_N_1"/>
    <property type="match status" value="1"/>
</dbReference>
<dbReference type="PROSITE" id="PS51323">
    <property type="entry name" value="IGFBP_N_2"/>
    <property type="match status" value="1"/>
</dbReference>
<dbReference type="PROSITE" id="PS00484">
    <property type="entry name" value="THYROGLOBULIN_1_1"/>
    <property type="match status" value="1"/>
</dbReference>
<dbReference type="PROSITE" id="PS51162">
    <property type="entry name" value="THYROGLOBULIN_1_2"/>
    <property type="match status" value="1"/>
</dbReference>
<comment type="function">
    <text evidence="1">IGF-binding proteins prolong the half-life of the IGFs and have been shown to either inhibit or stimulate the growth promoting effects of the IGFs on cell culture. They alter the interaction of IGFs with their cell surface receptors (By similarity).</text>
</comment>
<comment type="subunit">
    <text evidence="3">Interacts with igf1 and igf2.</text>
</comment>
<comment type="subcellular location">
    <subcellularLocation>
        <location evidence="8">Secreted</location>
    </subcellularLocation>
</comment>
<keyword id="KW-0217">Developmental protein</keyword>
<keyword id="KW-1015">Disulfide bond</keyword>
<keyword id="KW-0340">Growth factor binding</keyword>
<keyword id="KW-0341">Growth regulation</keyword>
<keyword id="KW-1185">Reference proteome</keyword>
<keyword id="KW-0964">Secreted</keyword>
<keyword id="KW-0732">Signal</keyword>
<gene>
    <name type="primary">igfbp2</name>
</gene>